<sequence length="218" mass="25603">MSDNDELQQIAHLRREYTKGGLRRRDLPADPLTLFERWLSQACEAKLADPTAMVVATVDEHDQPYQRIVLLKHYDEKGMVFYTNLGSRKAHQIENNPRVSLLFPWHTLERQVMVIGKAERLSTLEVMKYFHSRPRDSQIGAWVSKQSSRISARGILESKFLELKQKFQQGEVPLPSFWGGFRVSLEQIEFWQGGEHRLHDRFLYQRENDAWKIDRLAP</sequence>
<reference key="1">
    <citation type="journal article" date="2006" name="Mol. Microbiol.">
        <title>Role of pathogenicity island-associated integrases in the genome plasticity of uropathogenic Escherichia coli strain 536.</title>
        <authorList>
            <person name="Hochhut B."/>
            <person name="Wilde C."/>
            <person name="Balling G."/>
            <person name="Middendorf B."/>
            <person name="Dobrindt U."/>
            <person name="Brzuszkiewicz E."/>
            <person name="Gottschalk G."/>
            <person name="Carniel E."/>
            <person name="Hacker J."/>
        </authorList>
    </citation>
    <scope>NUCLEOTIDE SEQUENCE [LARGE SCALE GENOMIC DNA]</scope>
    <source>
        <strain>536 / UPEC</strain>
    </source>
</reference>
<keyword id="KW-0285">Flavoprotein</keyword>
<keyword id="KW-0288">FMN</keyword>
<keyword id="KW-0560">Oxidoreductase</keyword>
<keyword id="KW-0664">Pyridoxine biosynthesis</keyword>
<organism>
    <name type="scientific">Escherichia coli O6:K15:H31 (strain 536 / UPEC)</name>
    <dbReference type="NCBI Taxonomy" id="362663"/>
    <lineage>
        <taxon>Bacteria</taxon>
        <taxon>Pseudomonadati</taxon>
        <taxon>Pseudomonadota</taxon>
        <taxon>Gammaproteobacteria</taxon>
        <taxon>Enterobacterales</taxon>
        <taxon>Enterobacteriaceae</taxon>
        <taxon>Escherichia</taxon>
    </lineage>
</organism>
<feature type="chain" id="PRO_0000255867" description="Pyridoxine/pyridoxamine 5'-phosphate oxidase">
    <location>
        <begin position="1"/>
        <end position="218"/>
    </location>
</feature>
<feature type="binding site" evidence="1">
    <location>
        <begin position="14"/>
        <end position="17"/>
    </location>
    <ligand>
        <name>substrate</name>
    </ligand>
</feature>
<feature type="binding site" evidence="1">
    <location>
        <begin position="67"/>
        <end position="72"/>
    </location>
    <ligand>
        <name>FMN</name>
        <dbReference type="ChEBI" id="CHEBI:58210"/>
    </ligand>
</feature>
<feature type="binding site" evidence="1">
    <location>
        <position position="72"/>
    </location>
    <ligand>
        <name>substrate</name>
    </ligand>
</feature>
<feature type="binding site" evidence="1">
    <location>
        <begin position="82"/>
        <end position="83"/>
    </location>
    <ligand>
        <name>FMN</name>
        <dbReference type="ChEBI" id="CHEBI:58210"/>
    </ligand>
</feature>
<feature type="binding site" evidence="1">
    <location>
        <position position="88"/>
    </location>
    <ligand>
        <name>FMN</name>
        <dbReference type="ChEBI" id="CHEBI:58210"/>
    </ligand>
</feature>
<feature type="binding site" evidence="1">
    <location>
        <position position="89"/>
    </location>
    <ligand>
        <name>FMN</name>
        <dbReference type="ChEBI" id="CHEBI:58210"/>
    </ligand>
</feature>
<feature type="binding site" evidence="1">
    <location>
        <position position="111"/>
    </location>
    <ligand>
        <name>FMN</name>
        <dbReference type="ChEBI" id="CHEBI:58210"/>
    </ligand>
</feature>
<feature type="binding site" evidence="1">
    <location>
        <position position="129"/>
    </location>
    <ligand>
        <name>substrate</name>
    </ligand>
</feature>
<feature type="binding site" evidence="1">
    <location>
        <position position="133"/>
    </location>
    <ligand>
        <name>substrate</name>
    </ligand>
</feature>
<feature type="binding site" evidence="1">
    <location>
        <position position="137"/>
    </location>
    <ligand>
        <name>substrate</name>
    </ligand>
</feature>
<feature type="binding site" evidence="1">
    <location>
        <begin position="146"/>
        <end position="147"/>
    </location>
    <ligand>
        <name>FMN</name>
        <dbReference type="ChEBI" id="CHEBI:58210"/>
    </ligand>
</feature>
<feature type="binding site" evidence="1">
    <location>
        <position position="191"/>
    </location>
    <ligand>
        <name>FMN</name>
        <dbReference type="ChEBI" id="CHEBI:58210"/>
    </ligand>
</feature>
<feature type="binding site" evidence="1">
    <location>
        <begin position="197"/>
        <end position="199"/>
    </location>
    <ligand>
        <name>substrate</name>
    </ligand>
</feature>
<feature type="binding site" evidence="1">
    <location>
        <position position="201"/>
    </location>
    <ligand>
        <name>FMN</name>
        <dbReference type="ChEBI" id="CHEBI:58210"/>
    </ligand>
</feature>
<proteinExistence type="inferred from homology"/>
<gene>
    <name evidence="1" type="primary">pdxH</name>
    <name type="ordered locus">ECP_1584</name>
</gene>
<comment type="function">
    <text evidence="1">Catalyzes the oxidation of either pyridoxine 5'-phosphate (PNP) or pyridoxamine 5'-phosphate (PMP) into pyridoxal 5'-phosphate (PLP).</text>
</comment>
<comment type="catalytic activity">
    <reaction evidence="1">
        <text>pyridoxamine 5'-phosphate + O2 + H2O = pyridoxal 5'-phosphate + H2O2 + NH4(+)</text>
        <dbReference type="Rhea" id="RHEA:15817"/>
        <dbReference type="ChEBI" id="CHEBI:15377"/>
        <dbReference type="ChEBI" id="CHEBI:15379"/>
        <dbReference type="ChEBI" id="CHEBI:16240"/>
        <dbReference type="ChEBI" id="CHEBI:28938"/>
        <dbReference type="ChEBI" id="CHEBI:58451"/>
        <dbReference type="ChEBI" id="CHEBI:597326"/>
        <dbReference type="EC" id="1.4.3.5"/>
    </reaction>
</comment>
<comment type="catalytic activity">
    <reaction evidence="1">
        <text>pyridoxine 5'-phosphate + O2 = pyridoxal 5'-phosphate + H2O2</text>
        <dbReference type="Rhea" id="RHEA:15149"/>
        <dbReference type="ChEBI" id="CHEBI:15379"/>
        <dbReference type="ChEBI" id="CHEBI:16240"/>
        <dbReference type="ChEBI" id="CHEBI:58589"/>
        <dbReference type="ChEBI" id="CHEBI:597326"/>
        <dbReference type="EC" id="1.4.3.5"/>
    </reaction>
</comment>
<comment type="cofactor">
    <cofactor evidence="1">
        <name>FMN</name>
        <dbReference type="ChEBI" id="CHEBI:58210"/>
    </cofactor>
    <text evidence="1">Binds 1 FMN per subunit.</text>
</comment>
<comment type="pathway">
    <text evidence="1">Cofactor metabolism; pyridoxal 5'-phosphate salvage; pyridoxal 5'-phosphate from pyridoxamine 5'-phosphate: step 1/1.</text>
</comment>
<comment type="pathway">
    <text evidence="1">Cofactor metabolism; pyridoxal 5'-phosphate salvage; pyridoxal 5'-phosphate from pyridoxine 5'-phosphate: step 1/1.</text>
</comment>
<comment type="subunit">
    <text evidence="1">Homodimer.</text>
</comment>
<comment type="similarity">
    <text evidence="1">Belongs to the pyridoxamine 5'-phosphate oxidase family.</text>
</comment>
<name>PDXH_ECOL5</name>
<protein>
    <recommendedName>
        <fullName evidence="1">Pyridoxine/pyridoxamine 5'-phosphate oxidase</fullName>
        <ecNumber evidence="1">1.4.3.5</ecNumber>
    </recommendedName>
    <alternativeName>
        <fullName evidence="1">PNP/PMP oxidase</fullName>
        <shortName evidence="1">PNPOx</shortName>
    </alternativeName>
    <alternativeName>
        <fullName evidence="1">Pyridoxal 5'-phosphate synthase</fullName>
    </alternativeName>
</protein>
<evidence type="ECO:0000255" key="1">
    <source>
        <dbReference type="HAMAP-Rule" id="MF_01629"/>
    </source>
</evidence>
<accession>Q0THJ0</accession>
<dbReference type="EC" id="1.4.3.5" evidence="1"/>
<dbReference type="EMBL" id="CP000247">
    <property type="protein sequence ID" value="ABG69589.1"/>
    <property type="molecule type" value="Genomic_DNA"/>
</dbReference>
<dbReference type="RefSeq" id="WP_001282316.1">
    <property type="nucleotide sequence ID" value="NC_008253.1"/>
</dbReference>
<dbReference type="SMR" id="Q0THJ0"/>
<dbReference type="KEGG" id="ecp:ECP_1584"/>
<dbReference type="HOGENOM" id="CLU_032263_2_2_6"/>
<dbReference type="UniPathway" id="UPA01068">
    <property type="reaction ID" value="UER00304"/>
</dbReference>
<dbReference type="UniPathway" id="UPA01068">
    <property type="reaction ID" value="UER00305"/>
</dbReference>
<dbReference type="Proteomes" id="UP000009182">
    <property type="component" value="Chromosome"/>
</dbReference>
<dbReference type="GO" id="GO:0010181">
    <property type="term" value="F:FMN binding"/>
    <property type="evidence" value="ECO:0007669"/>
    <property type="project" value="UniProtKB-UniRule"/>
</dbReference>
<dbReference type="GO" id="GO:0004733">
    <property type="term" value="F:pyridoxamine phosphate oxidase activity"/>
    <property type="evidence" value="ECO:0007669"/>
    <property type="project" value="UniProtKB-UniRule"/>
</dbReference>
<dbReference type="GO" id="GO:0008615">
    <property type="term" value="P:pyridoxine biosynthetic process"/>
    <property type="evidence" value="ECO:0007669"/>
    <property type="project" value="UniProtKB-KW"/>
</dbReference>
<dbReference type="FunFam" id="2.30.110.10:FF:000001">
    <property type="entry name" value="Pyridoxine/pyridoxamine 5'-phosphate oxidase"/>
    <property type="match status" value="1"/>
</dbReference>
<dbReference type="Gene3D" id="2.30.110.10">
    <property type="entry name" value="Electron Transport, Fmn-binding Protein, Chain A"/>
    <property type="match status" value="1"/>
</dbReference>
<dbReference type="HAMAP" id="MF_01629">
    <property type="entry name" value="PdxH"/>
    <property type="match status" value="1"/>
</dbReference>
<dbReference type="InterPro" id="IPR000659">
    <property type="entry name" value="Pyridox_Oxase"/>
</dbReference>
<dbReference type="InterPro" id="IPR019740">
    <property type="entry name" value="Pyridox_Oxase_CS"/>
</dbReference>
<dbReference type="InterPro" id="IPR011576">
    <property type="entry name" value="Pyridox_Oxase_N"/>
</dbReference>
<dbReference type="InterPro" id="IPR019576">
    <property type="entry name" value="Pyridoxamine_oxidase_dimer_C"/>
</dbReference>
<dbReference type="InterPro" id="IPR012349">
    <property type="entry name" value="Split_barrel_FMN-bd"/>
</dbReference>
<dbReference type="NCBIfam" id="TIGR00558">
    <property type="entry name" value="pdxH"/>
    <property type="match status" value="1"/>
</dbReference>
<dbReference type="NCBIfam" id="NF004231">
    <property type="entry name" value="PRK05679.1"/>
    <property type="match status" value="1"/>
</dbReference>
<dbReference type="PANTHER" id="PTHR10851:SF0">
    <property type="entry name" value="PYRIDOXINE-5'-PHOSPHATE OXIDASE"/>
    <property type="match status" value="1"/>
</dbReference>
<dbReference type="PANTHER" id="PTHR10851">
    <property type="entry name" value="PYRIDOXINE-5-PHOSPHATE OXIDASE"/>
    <property type="match status" value="1"/>
</dbReference>
<dbReference type="Pfam" id="PF10590">
    <property type="entry name" value="PNP_phzG_C"/>
    <property type="match status" value="1"/>
</dbReference>
<dbReference type="Pfam" id="PF01243">
    <property type="entry name" value="PNPOx_N"/>
    <property type="match status" value="1"/>
</dbReference>
<dbReference type="PIRSF" id="PIRSF000190">
    <property type="entry name" value="Pyd_amn-ph_oxd"/>
    <property type="match status" value="1"/>
</dbReference>
<dbReference type="SUPFAM" id="SSF50475">
    <property type="entry name" value="FMN-binding split barrel"/>
    <property type="match status" value="1"/>
</dbReference>
<dbReference type="PROSITE" id="PS01064">
    <property type="entry name" value="PYRIDOX_OXIDASE"/>
    <property type="match status" value="1"/>
</dbReference>